<accession>Q8EUD3</accession>
<protein>
    <recommendedName>
        <fullName evidence="1">Adenylate kinase</fullName>
        <shortName evidence="1">AK</shortName>
        <ecNumber evidence="1">2.7.4.3</ecNumber>
    </recommendedName>
    <alternativeName>
        <fullName evidence="1">ATP-AMP transphosphorylase</fullName>
    </alternativeName>
    <alternativeName>
        <fullName evidence="1">ATP:AMP phosphotransferase</fullName>
    </alternativeName>
    <alternativeName>
        <fullName evidence="1">Adenylate monophosphate kinase</fullName>
    </alternativeName>
</protein>
<proteinExistence type="inferred from homology"/>
<gene>
    <name evidence="1" type="primary">adk</name>
    <name type="ordered locus">MYPE9970</name>
</gene>
<keyword id="KW-0067">ATP-binding</keyword>
<keyword id="KW-0963">Cytoplasm</keyword>
<keyword id="KW-0418">Kinase</keyword>
<keyword id="KW-0479">Metal-binding</keyword>
<keyword id="KW-0545">Nucleotide biosynthesis</keyword>
<keyword id="KW-0547">Nucleotide-binding</keyword>
<keyword id="KW-1185">Reference proteome</keyword>
<keyword id="KW-0808">Transferase</keyword>
<keyword id="KW-0862">Zinc</keyword>
<feature type="chain" id="PRO_0000158803" description="Adenylate kinase">
    <location>
        <begin position="1"/>
        <end position="215"/>
    </location>
</feature>
<feature type="region of interest" description="NMP" evidence="1">
    <location>
        <begin position="30"/>
        <end position="59"/>
    </location>
</feature>
<feature type="region of interest" description="LID" evidence="1">
    <location>
        <begin position="120"/>
        <end position="157"/>
    </location>
</feature>
<feature type="binding site" evidence="1">
    <location>
        <begin position="10"/>
        <end position="15"/>
    </location>
    <ligand>
        <name>ATP</name>
        <dbReference type="ChEBI" id="CHEBI:30616"/>
    </ligand>
</feature>
<feature type="binding site" evidence="1">
    <location>
        <position position="31"/>
    </location>
    <ligand>
        <name>AMP</name>
        <dbReference type="ChEBI" id="CHEBI:456215"/>
    </ligand>
</feature>
<feature type="binding site" evidence="1">
    <location>
        <position position="36"/>
    </location>
    <ligand>
        <name>AMP</name>
        <dbReference type="ChEBI" id="CHEBI:456215"/>
    </ligand>
</feature>
<feature type="binding site" evidence="1">
    <location>
        <begin position="57"/>
        <end position="59"/>
    </location>
    <ligand>
        <name>AMP</name>
        <dbReference type="ChEBI" id="CHEBI:456215"/>
    </ligand>
</feature>
<feature type="binding site" evidence="1">
    <location>
        <position position="91"/>
    </location>
    <ligand>
        <name>AMP</name>
        <dbReference type="ChEBI" id="CHEBI:456215"/>
    </ligand>
</feature>
<feature type="binding site" evidence="1">
    <location>
        <position position="121"/>
    </location>
    <ligand>
        <name>ATP</name>
        <dbReference type="ChEBI" id="CHEBI:30616"/>
    </ligand>
</feature>
<feature type="binding site" evidence="1">
    <location>
        <position position="124"/>
    </location>
    <ligand>
        <name>Zn(2+)</name>
        <dbReference type="ChEBI" id="CHEBI:29105"/>
        <note>structural</note>
    </ligand>
</feature>
<feature type="binding site" evidence="1">
    <location>
        <position position="127"/>
    </location>
    <ligand>
        <name>Zn(2+)</name>
        <dbReference type="ChEBI" id="CHEBI:29105"/>
        <note>structural</note>
    </ligand>
</feature>
<feature type="binding site" evidence="1">
    <location>
        <begin position="130"/>
        <end position="131"/>
    </location>
    <ligand>
        <name>ATP</name>
        <dbReference type="ChEBI" id="CHEBI:30616"/>
    </ligand>
</feature>
<feature type="binding site" evidence="1">
    <location>
        <position position="144"/>
    </location>
    <ligand>
        <name>Zn(2+)</name>
        <dbReference type="ChEBI" id="CHEBI:29105"/>
        <note>structural</note>
    </ligand>
</feature>
<feature type="binding site" evidence="1">
    <location>
        <position position="147"/>
    </location>
    <ligand>
        <name>Zn(2+)</name>
        <dbReference type="ChEBI" id="CHEBI:29105"/>
        <note>structural</note>
    </ligand>
</feature>
<feature type="binding site" evidence="1">
    <location>
        <position position="154"/>
    </location>
    <ligand>
        <name>AMP</name>
        <dbReference type="ChEBI" id="CHEBI:456215"/>
    </ligand>
</feature>
<feature type="binding site" evidence="1">
    <location>
        <position position="165"/>
    </location>
    <ligand>
        <name>AMP</name>
        <dbReference type="ChEBI" id="CHEBI:456215"/>
    </ligand>
</feature>
<comment type="function">
    <text evidence="1">Catalyzes the reversible transfer of the terminal phosphate group between ATP and AMP. Plays an important role in cellular energy homeostasis and in adenine nucleotide metabolism.</text>
</comment>
<comment type="catalytic activity">
    <reaction evidence="1">
        <text>AMP + ATP = 2 ADP</text>
        <dbReference type="Rhea" id="RHEA:12973"/>
        <dbReference type="ChEBI" id="CHEBI:30616"/>
        <dbReference type="ChEBI" id="CHEBI:456215"/>
        <dbReference type="ChEBI" id="CHEBI:456216"/>
        <dbReference type="EC" id="2.7.4.3"/>
    </reaction>
</comment>
<comment type="pathway">
    <text evidence="1">Purine metabolism; AMP biosynthesis via salvage pathway; AMP from ADP: step 1/1.</text>
</comment>
<comment type="subunit">
    <text evidence="1">Monomer.</text>
</comment>
<comment type="subcellular location">
    <subcellularLocation>
        <location evidence="1">Cytoplasm</location>
    </subcellularLocation>
</comment>
<comment type="domain">
    <text evidence="1">Consists of three domains, a large central CORE domain and two small peripheral domains, NMPbind and LID, which undergo movements during catalysis. The LID domain closes over the site of phosphoryl transfer upon ATP binding. Assembling and dissambling the active center during each catalytic cycle provides an effective means to prevent ATP hydrolysis. Some bacteria have evolved a zinc-coordinating structure that stabilizes the LID domain.</text>
</comment>
<comment type="similarity">
    <text evidence="1">Belongs to the adenylate kinase family.</text>
</comment>
<evidence type="ECO:0000255" key="1">
    <source>
        <dbReference type="HAMAP-Rule" id="MF_00235"/>
    </source>
</evidence>
<name>KAD_MALP2</name>
<sequence length="215" mass="24818">MKLVLLGAPGCGKGTISDYLVKNYGLVHLSTGDIFRQTIDQKGPYWEELKSYISKGLLVPDELTNKILKNALDKNMDKSFILDGCIRTIAQADFLSTILDIDLALYLEVPFDVLEKRLTGRRICSKCKRIYNIHYSAPKKEDICDDDGEFLIQRKDDQKEIIDERMKVYRTNSEPLIKYYEKLNKLVAINSENLDDLEKNIDDLFINKFNLRKIA</sequence>
<dbReference type="EC" id="2.7.4.3" evidence="1"/>
<dbReference type="EMBL" id="BA000026">
    <property type="protein sequence ID" value="BAC44783.1"/>
    <property type="molecule type" value="Genomic_DNA"/>
</dbReference>
<dbReference type="RefSeq" id="WP_011077811.1">
    <property type="nucleotide sequence ID" value="NC_004432.1"/>
</dbReference>
<dbReference type="SMR" id="Q8EUD3"/>
<dbReference type="FunCoup" id="Q8EUD3">
    <property type="interactions" value="251"/>
</dbReference>
<dbReference type="STRING" id="272633.gene:10732117"/>
<dbReference type="KEGG" id="mpe:MYPE9970"/>
<dbReference type="eggNOG" id="COG0563">
    <property type="taxonomic scope" value="Bacteria"/>
</dbReference>
<dbReference type="HOGENOM" id="CLU_032354_1_2_14"/>
<dbReference type="InParanoid" id="Q8EUD3"/>
<dbReference type="UniPathway" id="UPA00588">
    <property type="reaction ID" value="UER00649"/>
</dbReference>
<dbReference type="Proteomes" id="UP000002522">
    <property type="component" value="Chromosome"/>
</dbReference>
<dbReference type="GO" id="GO:0005737">
    <property type="term" value="C:cytoplasm"/>
    <property type="evidence" value="ECO:0007669"/>
    <property type="project" value="UniProtKB-SubCell"/>
</dbReference>
<dbReference type="GO" id="GO:0004017">
    <property type="term" value="F:adenylate kinase activity"/>
    <property type="evidence" value="ECO:0007669"/>
    <property type="project" value="UniProtKB-UniRule"/>
</dbReference>
<dbReference type="GO" id="GO:0005524">
    <property type="term" value="F:ATP binding"/>
    <property type="evidence" value="ECO:0007669"/>
    <property type="project" value="UniProtKB-UniRule"/>
</dbReference>
<dbReference type="GO" id="GO:0008270">
    <property type="term" value="F:zinc ion binding"/>
    <property type="evidence" value="ECO:0007669"/>
    <property type="project" value="UniProtKB-UniRule"/>
</dbReference>
<dbReference type="GO" id="GO:0044209">
    <property type="term" value="P:AMP salvage"/>
    <property type="evidence" value="ECO:0007669"/>
    <property type="project" value="UniProtKB-UniRule"/>
</dbReference>
<dbReference type="CDD" id="cd01428">
    <property type="entry name" value="ADK"/>
    <property type="match status" value="1"/>
</dbReference>
<dbReference type="Gene3D" id="3.40.50.300">
    <property type="entry name" value="P-loop containing nucleotide triphosphate hydrolases"/>
    <property type="match status" value="1"/>
</dbReference>
<dbReference type="HAMAP" id="MF_00235">
    <property type="entry name" value="Adenylate_kinase_Adk"/>
    <property type="match status" value="1"/>
</dbReference>
<dbReference type="InterPro" id="IPR006259">
    <property type="entry name" value="Adenyl_kin_sub"/>
</dbReference>
<dbReference type="InterPro" id="IPR000850">
    <property type="entry name" value="Adenylat/UMP-CMP_kin"/>
</dbReference>
<dbReference type="InterPro" id="IPR007862">
    <property type="entry name" value="Adenylate_kinase_lid-dom"/>
</dbReference>
<dbReference type="InterPro" id="IPR036193">
    <property type="entry name" value="ADK_active_lid_dom_sf"/>
</dbReference>
<dbReference type="InterPro" id="IPR027417">
    <property type="entry name" value="P-loop_NTPase"/>
</dbReference>
<dbReference type="NCBIfam" id="TIGR01351">
    <property type="entry name" value="adk"/>
    <property type="match status" value="1"/>
</dbReference>
<dbReference type="PANTHER" id="PTHR23359">
    <property type="entry name" value="NUCLEOTIDE KINASE"/>
    <property type="match status" value="1"/>
</dbReference>
<dbReference type="Pfam" id="PF00406">
    <property type="entry name" value="ADK"/>
    <property type="match status" value="1"/>
</dbReference>
<dbReference type="Pfam" id="PF05191">
    <property type="entry name" value="ADK_lid"/>
    <property type="match status" value="1"/>
</dbReference>
<dbReference type="PRINTS" id="PR00094">
    <property type="entry name" value="ADENYLTKNASE"/>
</dbReference>
<dbReference type="SUPFAM" id="SSF57774">
    <property type="entry name" value="Microbial and mitochondrial ADK, insert 'zinc finger' domain"/>
    <property type="match status" value="1"/>
</dbReference>
<dbReference type="SUPFAM" id="SSF52540">
    <property type="entry name" value="P-loop containing nucleoside triphosphate hydrolases"/>
    <property type="match status" value="1"/>
</dbReference>
<reference key="1">
    <citation type="journal article" date="2002" name="Nucleic Acids Res.">
        <title>The complete genomic sequence of Mycoplasma penetrans, an intracellular bacterial pathogen in humans.</title>
        <authorList>
            <person name="Sasaki Y."/>
            <person name="Ishikawa J."/>
            <person name="Yamashita A."/>
            <person name="Oshima K."/>
            <person name="Kenri T."/>
            <person name="Furuya K."/>
            <person name="Yoshino C."/>
            <person name="Horino A."/>
            <person name="Shiba T."/>
            <person name="Sasaki T."/>
            <person name="Hattori M."/>
        </authorList>
    </citation>
    <scope>NUCLEOTIDE SEQUENCE [LARGE SCALE GENOMIC DNA]</scope>
    <source>
        <strain>HF-2</strain>
    </source>
</reference>
<organism>
    <name type="scientific">Malacoplasma penetrans (strain HF-2)</name>
    <name type="common">Mycoplasma penetrans</name>
    <dbReference type="NCBI Taxonomy" id="272633"/>
    <lineage>
        <taxon>Bacteria</taxon>
        <taxon>Bacillati</taxon>
        <taxon>Mycoplasmatota</taxon>
        <taxon>Mycoplasmoidales</taxon>
        <taxon>Mycoplasmoidaceae</taxon>
        <taxon>Malacoplasma</taxon>
    </lineage>
</organism>